<reference key="1">
    <citation type="journal article" date="2008" name="J. Bacteriol.">
        <title>The complete genome sequence of Escherichia coli DH10B: insights into the biology of a laboratory workhorse.</title>
        <authorList>
            <person name="Durfee T."/>
            <person name="Nelson R."/>
            <person name="Baldwin S."/>
            <person name="Plunkett G. III"/>
            <person name="Burland V."/>
            <person name="Mau B."/>
            <person name="Petrosino J.F."/>
            <person name="Qin X."/>
            <person name="Muzny D.M."/>
            <person name="Ayele M."/>
            <person name="Gibbs R.A."/>
            <person name="Csorgo B."/>
            <person name="Posfai G."/>
            <person name="Weinstock G.M."/>
            <person name="Blattner F.R."/>
        </authorList>
    </citation>
    <scope>NUCLEOTIDE SEQUENCE [LARGE SCALE GENOMIC DNA]</scope>
    <source>
        <strain>K12 / DH10B</strain>
    </source>
</reference>
<sequence>MSITKDQIIEAVAAMSVMDVVELISAMEEKFGVSAAAAVAVAAGPVEAAEEKTEFDVILKAAGANKVAVIKAVRGATGLGLKEAKDLVESAPAALKEGVSKDDAEALKKALEEAGAEVEVK</sequence>
<proteinExistence type="inferred from homology"/>
<protein>
    <recommendedName>
        <fullName evidence="1">Large ribosomal subunit protein bL12</fullName>
    </recommendedName>
    <alternativeName>
        <fullName evidence="2">50S ribosomal protein L7/L12</fullName>
    </alternativeName>
</protein>
<comment type="function">
    <text evidence="1">Forms part of the ribosomal stalk which helps the ribosome interact with GTP-bound translation factors. Is thus essential for accurate translation.</text>
</comment>
<comment type="subunit">
    <text evidence="1">Homodimer. Part of the ribosomal stalk of the 50S ribosomal subunit. Forms a multimeric L10(L12)X complex, where L10 forms an elongated spine to which 2 to 4 L12 dimers bind in a sequential fashion. Binds GTP-bound translation factors.</text>
</comment>
<comment type="similarity">
    <text evidence="1">Belongs to the bacterial ribosomal protein bL12 family.</text>
</comment>
<keyword id="KW-0687">Ribonucleoprotein</keyword>
<keyword id="KW-0689">Ribosomal protein</keyword>
<evidence type="ECO:0000255" key="1">
    <source>
        <dbReference type="HAMAP-Rule" id="MF_00368"/>
    </source>
</evidence>
<evidence type="ECO:0000305" key="2"/>
<gene>
    <name evidence="1" type="primary">rplL</name>
    <name type="ordered locus">ECDH10B_4174</name>
</gene>
<name>RL7_ECODH</name>
<dbReference type="EMBL" id="CP000948">
    <property type="protein sequence ID" value="ACB04988.1"/>
    <property type="molecule type" value="Genomic_DNA"/>
</dbReference>
<dbReference type="RefSeq" id="WP_000028878.1">
    <property type="nucleotide sequence ID" value="NC_010473.1"/>
</dbReference>
<dbReference type="SMR" id="B1XBY8"/>
<dbReference type="GeneID" id="86944525"/>
<dbReference type="KEGG" id="ecd:ECDH10B_4174"/>
<dbReference type="HOGENOM" id="CLU_086499_3_2_6"/>
<dbReference type="GO" id="GO:0022625">
    <property type="term" value="C:cytosolic large ribosomal subunit"/>
    <property type="evidence" value="ECO:0007669"/>
    <property type="project" value="TreeGrafter"/>
</dbReference>
<dbReference type="GO" id="GO:0003729">
    <property type="term" value="F:mRNA binding"/>
    <property type="evidence" value="ECO:0007669"/>
    <property type="project" value="TreeGrafter"/>
</dbReference>
<dbReference type="GO" id="GO:0003735">
    <property type="term" value="F:structural constituent of ribosome"/>
    <property type="evidence" value="ECO:0007669"/>
    <property type="project" value="InterPro"/>
</dbReference>
<dbReference type="GO" id="GO:0006412">
    <property type="term" value="P:translation"/>
    <property type="evidence" value="ECO:0007669"/>
    <property type="project" value="UniProtKB-UniRule"/>
</dbReference>
<dbReference type="CDD" id="cd00387">
    <property type="entry name" value="Ribosomal_L7_L12"/>
    <property type="match status" value="1"/>
</dbReference>
<dbReference type="FunFam" id="1.20.5.710:FF:000001">
    <property type="entry name" value="50S ribosomal protein L7/L12"/>
    <property type="match status" value="1"/>
</dbReference>
<dbReference type="FunFam" id="3.30.1390.10:FF:000001">
    <property type="entry name" value="50S ribosomal protein L7/L12"/>
    <property type="match status" value="1"/>
</dbReference>
<dbReference type="Gene3D" id="3.30.1390.10">
    <property type="match status" value="1"/>
</dbReference>
<dbReference type="Gene3D" id="1.20.5.710">
    <property type="entry name" value="Single helix bin"/>
    <property type="match status" value="1"/>
</dbReference>
<dbReference type="HAMAP" id="MF_00368">
    <property type="entry name" value="Ribosomal_bL12"/>
    <property type="match status" value="1"/>
</dbReference>
<dbReference type="InterPro" id="IPR000206">
    <property type="entry name" value="Ribosomal_bL12"/>
</dbReference>
<dbReference type="InterPro" id="IPR013823">
    <property type="entry name" value="Ribosomal_bL12_C"/>
</dbReference>
<dbReference type="InterPro" id="IPR014719">
    <property type="entry name" value="Ribosomal_bL12_C/ClpS-like"/>
</dbReference>
<dbReference type="InterPro" id="IPR008932">
    <property type="entry name" value="Ribosomal_bL12_oligo"/>
</dbReference>
<dbReference type="InterPro" id="IPR036235">
    <property type="entry name" value="Ribosomal_bL12_oligo_N_sf"/>
</dbReference>
<dbReference type="NCBIfam" id="TIGR00855">
    <property type="entry name" value="L12"/>
    <property type="match status" value="1"/>
</dbReference>
<dbReference type="PANTHER" id="PTHR45987">
    <property type="entry name" value="39S RIBOSOMAL PROTEIN L12"/>
    <property type="match status" value="1"/>
</dbReference>
<dbReference type="PANTHER" id="PTHR45987:SF4">
    <property type="entry name" value="LARGE RIBOSOMAL SUBUNIT PROTEIN BL12M"/>
    <property type="match status" value="1"/>
</dbReference>
<dbReference type="Pfam" id="PF00542">
    <property type="entry name" value="Ribosomal_L12"/>
    <property type="match status" value="1"/>
</dbReference>
<dbReference type="Pfam" id="PF16320">
    <property type="entry name" value="Ribosomal_L12_N"/>
    <property type="match status" value="1"/>
</dbReference>
<dbReference type="SUPFAM" id="SSF54736">
    <property type="entry name" value="ClpS-like"/>
    <property type="match status" value="1"/>
</dbReference>
<dbReference type="SUPFAM" id="SSF48300">
    <property type="entry name" value="Ribosomal protein L7/12, oligomerisation (N-terminal) domain"/>
    <property type="match status" value="1"/>
</dbReference>
<organism>
    <name type="scientific">Escherichia coli (strain K12 / DH10B)</name>
    <dbReference type="NCBI Taxonomy" id="316385"/>
    <lineage>
        <taxon>Bacteria</taxon>
        <taxon>Pseudomonadati</taxon>
        <taxon>Pseudomonadota</taxon>
        <taxon>Gammaproteobacteria</taxon>
        <taxon>Enterobacterales</taxon>
        <taxon>Enterobacteriaceae</taxon>
        <taxon>Escherichia</taxon>
    </lineage>
</organism>
<accession>B1XBY8</accession>
<feature type="chain" id="PRO_1000121433" description="Large ribosomal subunit protein bL12">
    <location>
        <begin position="1"/>
        <end position="121"/>
    </location>
</feature>